<name>KATG_ECOHS</name>
<comment type="function">
    <text evidence="1">Bifunctional enzyme with both catalase and broad-spectrum peroxidase activity.</text>
</comment>
<comment type="catalytic activity">
    <reaction evidence="1">
        <text>H2O2 + AH2 = A + 2 H2O</text>
        <dbReference type="Rhea" id="RHEA:30275"/>
        <dbReference type="ChEBI" id="CHEBI:13193"/>
        <dbReference type="ChEBI" id="CHEBI:15377"/>
        <dbReference type="ChEBI" id="CHEBI:16240"/>
        <dbReference type="ChEBI" id="CHEBI:17499"/>
        <dbReference type="EC" id="1.11.1.21"/>
    </reaction>
</comment>
<comment type="catalytic activity">
    <reaction evidence="1">
        <text>2 H2O2 = O2 + 2 H2O</text>
        <dbReference type="Rhea" id="RHEA:20309"/>
        <dbReference type="ChEBI" id="CHEBI:15377"/>
        <dbReference type="ChEBI" id="CHEBI:15379"/>
        <dbReference type="ChEBI" id="CHEBI:16240"/>
        <dbReference type="EC" id="1.11.1.21"/>
    </reaction>
</comment>
<comment type="cofactor">
    <cofactor evidence="1">
        <name>heme b</name>
        <dbReference type="ChEBI" id="CHEBI:60344"/>
    </cofactor>
    <text evidence="1">Binds 1 heme b (iron(II)-protoporphyrin IX) group per dimer.</text>
</comment>
<comment type="subunit">
    <text evidence="1">Homodimer or homotetramer.</text>
</comment>
<comment type="PTM">
    <text evidence="1">Formation of the three residue Trp-Tyr-Met cross-link is important for the catalase, but not the peroxidase activity of the enzyme.</text>
</comment>
<comment type="similarity">
    <text evidence="1">Belongs to the peroxidase family. Peroxidase/catalase subfamily.</text>
</comment>
<keyword id="KW-0349">Heme</keyword>
<keyword id="KW-0376">Hydrogen peroxide</keyword>
<keyword id="KW-0408">Iron</keyword>
<keyword id="KW-0479">Metal-binding</keyword>
<keyword id="KW-0560">Oxidoreductase</keyword>
<keyword id="KW-0575">Peroxidase</keyword>
<proteinExistence type="inferred from homology"/>
<reference key="1">
    <citation type="journal article" date="2008" name="J. Bacteriol.">
        <title>The pangenome structure of Escherichia coli: comparative genomic analysis of E. coli commensal and pathogenic isolates.</title>
        <authorList>
            <person name="Rasko D.A."/>
            <person name="Rosovitz M.J."/>
            <person name="Myers G.S.A."/>
            <person name="Mongodin E.F."/>
            <person name="Fricke W.F."/>
            <person name="Gajer P."/>
            <person name="Crabtree J."/>
            <person name="Sebaihia M."/>
            <person name="Thomson N.R."/>
            <person name="Chaudhuri R."/>
            <person name="Henderson I.R."/>
            <person name="Sperandio V."/>
            <person name="Ravel J."/>
        </authorList>
    </citation>
    <scope>NUCLEOTIDE SEQUENCE [LARGE SCALE GENOMIC DNA]</scope>
    <source>
        <strain>HS</strain>
    </source>
</reference>
<organism>
    <name type="scientific">Escherichia coli O9:H4 (strain HS)</name>
    <dbReference type="NCBI Taxonomy" id="331112"/>
    <lineage>
        <taxon>Bacteria</taxon>
        <taxon>Pseudomonadati</taxon>
        <taxon>Pseudomonadota</taxon>
        <taxon>Gammaproteobacteria</taxon>
        <taxon>Enterobacterales</taxon>
        <taxon>Enterobacteriaceae</taxon>
        <taxon>Escherichia</taxon>
    </lineage>
</organism>
<sequence length="726" mass="80024">MSTSDDIHNTTATGKCPFHQGGHDQSAGAGTTTRDWWPNQLRVDLLNQHSNRSNPLGEDFDYRKEFSKLDYYGLKKDLKALLTESQPWWPADWGSYAGLFIRMAWHGAGTYRSIDGRGGAGRGQQRFAPLNSWPDNVSLDKARRLLWPIKQKYGQKISWADLFILAGNVALENSGFRTFGFGAGREDVWEPDLDVNWGDEKAWLTHRHPEALAKAPLGATEMGLIYVNPEGPDHSGEPLSAAAAIRATFGNMGMNDEETVALIAGGHTLGKTHGAGPTSNVGPDPEAAPIEEQGLGWASTYGSGVGADAITSGLEVVWTQTPTQWSNYFFENLFKYEWVQTRSPAGAIQFEAVDAPEIIPDPFDPSKKRKPTMLVTDLTLRFDPEFEKISRRFLNDPQAFNEAFARAWFKLTHRDMGPKSRYIGPEVPKEDLIWQDPLPQPIYNPTEQDIIDLKFAIADSGLSVSELVSVAWASASTFRGGDKRGGANGARLALMPQRDWDVNAAAVRALPVLEKIQKESGKASLADIIVLAGVVGVEKAASAAGLSIHVPFAPGRVDARQDQTDIEMFELLEPIADGFRNYRARLDVSTTESLLIDKAQQLTLTAPEMTALVGGMRVLGANFDGSKNGVFTDRVGVLSNDFFVNLLDMRYEWKATDESKELFEGRDRETGEVKFTASRADLVFGSNSVLRAVAEVYASSDAHEKFVKDFVAAWVKVMNLDRFDLL</sequence>
<protein>
    <recommendedName>
        <fullName evidence="1">Catalase-peroxidase</fullName>
        <shortName evidence="1">CP</shortName>
        <ecNumber evidence="1">1.11.1.21</ecNumber>
    </recommendedName>
    <alternativeName>
        <fullName evidence="1">Peroxidase/catalase</fullName>
    </alternativeName>
</protein>
<feature type="chain" id="PRO_0000354786" description="Catalase-peroxidase">
    <location>
        <begin position="1"/>
        <end position="726"/>
    </location>
</feature>
<feature type="region of interest" description="Disordered" evidence="2">
    <location>
        <begin position="1"/>
        <end position="33"/>
    </location>
</feature>
<feature type="active site" description="Proton acceptor" evidence="1">
    <location>
        <position position="106"/>
    </location>
</feature>
<feature type="binding site" description="axial binding residue" evidence="1">
    <location>
        <position position="267"/>
    </location>
    <ligand>
        <name>heme b</name>
        <dbReference type="ChEBI" id="CHEBI:60344"/>
    </ligand>
    <ligandPart>
        <name>Fe</name>
        <dbReference type="ChEBI" id="CHEBI:18248"/>
    </ligandPart>
</feature>
<feature type="site" description="Transition state stabilizer" evidence="1">
    <location>
        <position position="102"/>
    </location>
</feature>
<feature type="cross-link" description="Tryptophyl-tyrosyl-methioninium (Trp-Tyr) (with M-252)" evidence="1">
    <location>
        <begin position="105"/>
        <end position="226"/>
    </location>
</feature>
<feature type="cross-link" description="Tryptophyl-tyrosyl-methioninium (Tyr-Met) (with W-105)" evidence="1">
    <location>
        <begin position="226"/>
        <end position="252"/>
    </location>
</feature>
<evidence type="ECO:0000255" key="1">
    <source>
        <dbReference type="HAMAP-Rule" id="MF_01961"/>
    </source>
</evidence>
<evidence type="ECO:0000256" key="2">
    <source>
        <dbReference type="SAM" id="MobiDB-lite"/>
    </source>
</evidence>
<accession>A8A750</accession>
<dbReference type="EC" id="1.11.1.21" evidence="1"/>
<dbReference type="EMBL" id="CP000802">
    <property type="protein sequence ID" value="ABV08354.1"/>
    <property type="molecule type" value="Genomic_DNA"/>
</dbReference>
<dbReference type="RefSeq" id="WP_001295695.1">
    <property type="nucleotide sequence ID" value="NC_009800.1"/>
</dbReference>
<dbReference type="SMR" id="A8A750"/>
<dbReference type="KEGG" id="ecx:EcHS_A4176"/>
<dbReference type="HOGENOM" id="CLU_025424_2_0_6"/>
<dbReference type="GO" id="GO:0005829">
    <property type="term" value="C:cytosol"/>
    <property type="evidence" value="ECO:0007669"/>
    <property type="project" value="TreeGrafter"/>
</dbReference>
<dbReference type="GO" id="GO:0004096">
    <property type="term" value="F:catalase activity"/>
    <property type="evidence" value="ECO:0007669"/>
    <property type="project" value="UniProtKB-UniRule"/>
</dbReference>
<dbReference type="GO" id="GO:0020037">
    <property type="term" value="F:heme binding"/>
    <property type="evidence" value="ECO:0007669"/>
    <property type="project" value="InterPro"/>
</dbReference>
<dbReference type="GO" id="GO:0046872">
    <property type="term" value="F:metal ion binding"/>
    <property type="evidence" value="ECO:0007669"/>
    <property type="project" value="UniProtKB-KW"/>
</dbReference>
<dbReference type="GO" id="GO:0070301">
    <property type="term" value="P:cellular response to hydrogen peroxide"/>
    <property type="evidence" value="ECO:0007669"/>
    <property type="project" value="TreeGrafter"/>
</dbReference>
<dbReference type="GO" id="GO:0042744">
    <property type="term" value="P:hydrogen peroxide catabolic process"/>
    <property type="evidence" value="ECO:0007669"/>
    <property type="project" value="UniProtKB-KW"/>
</dbReference>
<dbReference type="CDD" id="cd08200">
    <property type="entry name" value="catalase_peroxidase_2"/>
    <property type="match status" value="1"/>
</dbReference>
<dbReference type="FunFam" id="1.10.420.10:FF:000002">
    <property type="entry name" value="Catalase-peroxidase"/>
    <property type="match status" value="1"/>
</dbReference>
<dbReference type="FunFam" id="1.10.420.10:FF:000004">
    <property type="entry name" value="Catalase-peroxidase"/>
    <property type="match status" value="1"/>
</dbReference>
<dbReference type="FunFam" id="1.10.520.10:FF:000002">
    <property type="entry name" value="Catalase-peroxidase"/>
    <property type="match status" value="1"/>
</dbReference>
<dbReference type="Gene3D" id="1.10.520.10">
    <property type="match status" value="2"/>
</dbReference>
<dbReference type="Gene3D" id="1.10.420.10">
    <property type="entry name" value="Peroxidase, domain 2"/>
    <property type="match status" value="2"/>
</dbReference>
<dbReference type="HAMAP" id="MF_01961">
    <property type="entry name" value="Catal_peroxid"/>
    <property type="match status" value="1"/>
</dbReference>
<dbReference type="InterPro" id="IPR000763">
    <property type="entry name" value="Catalase_peroxidase"/>
</dbReference>
<dbReference type="InterPro" id="IPR002016">
    <property type="entry name" value="Haem_peroxidase"/>
</dbReference>
<dbReference type="InterPro" id="IPR010255">
    <property type="entry name" value="Haem_peroxidase_sf"/>
</dbReference>
<dbReference type="InterPro" id="IPR019794">
    <property type="entry name" value="Peroxidases_AS"/>
</dbReference>
<dbReference type="InterPro" id="IPR019793">
    <property type="entry name" value="Peroxidases_heam-ligand_BS"/>
</dbReference>
<dbReference type="NCBIfam" id="TIGR00198">
    <property type="entry name" value="cat_per_HPI"/>
    <property type="match status" value="1"/>
</dbReference>
<dbReference type="NCBIfam" id="NF011635">
    <property type="entry name" value="PRK15061.1"/>
    <property type="match status" value="1"/>
</dbReference>
<dbReference type="PANTHER" id="PTHR30555:SF0">
    <property type="entry name" value="CATALASE-PEROXIDASE"/>
    <property type="match status" value="1"/>
</dbReference>
<dbReference type="PANTHER" id="PTHR30555">
    <property type="entry name" value="HYDROPEROXIDASE I, BIFUNCTIONAL CATALASE-PEROXIDASE"/>
    <property type="match status" value="1"/>
</dbReference>
<dbReference type="Pfam" id="PF00141">
    <property type="entry name" value="peroxidase"/>
    <property type="match status" value="2"/>
</dbReference>
<dbReference type="PRINTS" id="PR00460">
    <property type="entry name" value="BPEROXIDASE"/>
</dbReference>
<dbReference type="PRINTS" id="PR00458">
    <property type="entry name" value="PEROXIDASE"/>
</dbReference>
<dbReference type="SUPFAM" id="SSF48113">
    <property type="entry name" value="Heme-dependent peroxidases"/>
    <property type="match status" value="2"/>
</dbReference>
<dbReference type="PROSITE" id="PS00435">
    <property type="entry name" value="PEROXIDASE_1"/>
    <property type="match status" value="1"/>
</dbReference>
<dbReference type="PROSITE" id="PS00436">
    <property type="entry name" value="PEROXIDASE_2"/>
    <property type="match status" value="1"/>
</dbReference>
<dbReference type="PROSITE" id="PS50873">
    <property type="entry name" value="PEROXIDASE_4"/>
    <property type="match status" value="1"/>
</dbReference>
<gene>
    <name evidence="1" type="primary">katG</name>
    <name type="ordered locus">EcHS_A4176</name>
</gene>